<evidence type="ECO:0000255" key="1">
    <source>
        <dbReference type="HAMAP-Rule" id="MF_00270"/>
    </source>
</evidence>
<evidence type="ECO:0000305" key="2"/>
<sequence>MPYYRRRVSPIKPGDPIDYKDVDLLRRFITERGKILPRRITGLTARQQRDLTRAIKQARVLALLPFINREG</sequence>
<proteinExistence type="inferred from homology"/>
<feature type="chain" id="PRO_1000078688" description="Small ribosomal subunit protein bS18">
    <location>
        <begin position="1"/>
        <end position="71"/>
    </location>
</feature>
<comment type="function">
    <text evidence="1">Binds as a heterodimer with protein bS6 to the central domain of the 16S rRNA, where it helps stabilize the platform of the 30S subunit.</text>
</comment>
<comment type="subunit">
    <text evidence="1">Part of the 30S ribosomal subunit. Forms a tight heterodimer with protein bS6.</text>
</comment>
<comment type="similarity">
    <text evidence="1">Belongs to the bacterial ribosomal protein bS18 family.</text>
</comment>
<accession>B0C2J3</accession>
<protein>
    <recommendedName>
        <fullName evidence="1">Small ribosomal subunit protein bS18</fullName>
    </recommendedName>
    <alternativeName>
        <fullName evidence="2">30S ribosomal protein S18</fullName>
    </alternativeName>
</protein>
<reference key="1">
    <citation type="journal article" date="2008" name="Proc. Natl. Acad. Sci. U.S.A.">
        <title>Niche adaptation and genome expansion in the chlorophyll d-producing cyanobacterium Acaryochloris marina.</title>
        <authorList>
            <person name="Swingley W.D."/>
            <person name="Chen M."/>
            <person name="Cheung P.C."/>
            <person name="Conrad A.L."/>
            <person name="Dejesa L.C."/>
            <person name="Hao J."/>
            <person name="Honchak B.M."/>
            <person name="Karbach L.E."/>
            <person name="Kurdoglu A."/>
            <person name="Lahiri S."/>
            <person name="Mastrian S.D."/>
            <person name="Miyashita H."/>
            <person name="Page L."/>
            <person name="Ramakrishna P."/>
            <person name="Satoh S."/>
            <person name="Sattley W.M."/>
            <person name="Shimada Y."/>
            <person name="Taylor H.L."/>
            <person name="Tomo T."/>
            <person name="Tsuchiya T."/>
            <person name="Wang Z.T."/>
            <person name="Raymond J."/>
            <person name="Mimuro M."/>
            <person name="Blankenship R.E."/>
            <person name="Touchman J.W."/>
        </authorList>
    </citation>
    <scope>NUCLEOTIDE SEQUENCE [LARGE SCALE GENOMIC DNA]</scope>
    <source>
        <strain>MBIC 11017</strain>
    </source>
</reference>
<organism>
    <name type="scientific">Acaryochloris marina (strain MBIC 11017)</name>
    <dbReference type="NCBI Taxonomy" id="329726"/>
    <lineage>
        <taxon>Bacteria</taxon>
        <taxon>Bacillati</taxon>
        <taxon>Cyanobacteriota</taxon>
        <taxon>Cyanophyceae</taxon>
        <taxon>Acaryochloridales</taxon>
        <taxon>Acaryochloridaceae</taxon>
        <taxon>Acaryochloris</taxon>
    </lineage>
</organism>
<gene>
    <name evidence="1" type="primary">rpsR</name>
    <name evidence="1" type="synonym">rps18</name>
    <name type="ordered locus">AM1_4812</name>
</gene>
<name>RS18_ACAM1</name>
<keyword id="KW-1185">Reference proteome</keyword>
<keyword id="KW-0687">Ribonucleoprotein</keyword>
<keyword id="KW-0689">Ribosomal protein</keyword>
<keyword id="KW-0694">RNA-binding</keyword>
<keyword id="KW-0699">rRNA-binding</keyword>
<dbReference type="EMBL" id="CP000828">
    <property type="protein sequence ID" value="ABW29783.1"/>
    <property type="molecule type" value="Genomic_DNA"/>
</dbReference>
<dbReference type="RefSeq" id="WP_010480754.1">
    <property type="nucleotide sequence ID" value="NC_009925.1"/>
</dbReference>
<dbReference type="SMR" id="B0C2J3"/>
<dbReference type="STRING" id="329726.AM1_4812"/>
<dbReference type="KEGG" id="amr:AM1_4812"/>
<dbReference type="eggNOG" id="COG0238">
    <property type="taxonomic scope" value="Bacteria"/>
</dbReference>
<dbReference type="HOGENOM" id="CLU_148710_2_3_3"/>
<dbReference type="OrthoDB" id="9812008at2"/>
<dbReference type="Proteomes" id="UP000000268">
    <property type="component" value="Chromosome"/>
</dbReference>
<dbReference type="GO" id="GO:0022627">
    <property type="term" value="C:cytosolic small ribosomal subunit"/>
    <property type="evidence" value="ECO:0007669"/>
    <property type="project" value="TreeGrafter"/>
</dbReference>
<dbReference type="GO" id="GO:0070181">
    <property type="term" value="F:small ribosomal subunit rRNA binding"/>
    <property type="evidence" value="ECO:0007669"/>
    <property type="project" value="TreeGrafter"/>
</dbReference>
<dbReference type="GO" id="GO:0003735">
    <property type="term" value="F:structural constituent of ribosome"/>
    <property type="evidence" value="ECO:0007669"/>
    <property type="project" value="InterPro"/>
</dbReference>
<dbReference type="GO" id="GO:0006412">
    <property type="term" value="P:translation"/>
    <property type="evidence" value="ECO:0007669"/>
    <property type="project" value="UniProtKB-UniRule"/>
</dbReference>
<dbReference type="FunFam" id="4.10.640.10:FF:000002">
    <property type="entry name" value="30S ribosomal protein S18, chloroplastic"/>
    <property type="match status" value="1"/>
</dbReference>
<dbReference type="Gene3D" id="4.10.640.10">
    <property type="entry name" value="Ribosomal protein S18"/>
    <property type="match status" value="1"/>
</dbReference>
<dbReference type="HAMAP" id="MF_00270">
    <property type="entry name" value="Ribosomal_bS18"/>
    <property type="match status" value="1"/>
</dbReference>
<dbReference type="InterPro" id="IPR001648">
    <property type="entry name" value="Ribosomal_bS18"/>
</dbReference>
<dbReference type="InterPro" id="IPR018275">
    <property type="entry name" value="Ribosomal_bS18_CS"/>
</dbReference>
<dbReference type="InterPro" id="IPR036870">
    <property type="entry name" value="Ribosomal_bS18_sf"/>
</dbReference>
<dbReference type="NCBIfam" id="TIGR00165">
    <property type="entry name" value="S18"/>
    <property type="match status" value="1"/>
</dbReference>
<dbReference type="PANTHER" id="PTHR13479">
    <property type="entry name" value="30S RIBOSOMAL PROTEIN S18"/>
    <property type="match status" value="1"/>
</dbReference>
<dbReference type="PANTHER" id="PTHR13479:SF40">
    <property type="entry name" value="SMALL RIBOSOMAL SUBUNIT PROTEIN BS18M"/>
    <property type="match status" value="1"/>
</dbReference>
<dbReference type="Pfam" id="PF01084">
    <property type="entry name" value="Ribosomal_S18"/>
    <property type="match status" value="1"/>
</dbReference>
<dbReference type="PRINTS" id="PR00974">
    <property type="entry name" value="RIBOSOMALS18"/>
</dbReference>
<dbReference type="SUPFAM" id="SSF46911">
    <property type="entry name" value="Ribosomal protein S18"/>
    <property type="match status" value="1"/>
</dbReference>
<dbReference type="PROSITE" id="PS00057">
    <property type="entry name" value="RIBOSOMAL_S18"/>
    <property type="match status" value="1"/>
</dbReference>